<reference key="1">
    <citation type="journal article" date="1997" name="Nature">
        <title>The nucleotide sequence of Saccharomyces cerevisiae chromosome XII.</title>
        <authorList>
            <person name="Johnston M."/>
            <person name="Hillier L.W."/>
            <person name="Riles L."/>
            <person name="Albermann K."/>
            <person name="Andre B."/>
            <person name="Ansorge W."/>
            <person name="Benes V."/>
            <person name="Brueckner M."/>
            <person name="Delius H."/>
            <person name="Dubois E."/>
            <person name="Duesterhoeft A."/>
            <person name="Entian K.-D."/>
            <person name="Floeth M."/>
            <person name="Goffeau A."/>
            <person name="Hebling U."/>
            <person name="Heumann K."/>
            <person name="Heuss-Neitzel D."/>
            <person name="Hilbert H."/>
            <person name="Hilger F."/>
            <person name="Kleine K."/>
            <person name="Koetter P."/>
            <person name="Louis E.J."/>
            <person name="Messenguy F."/>
            <person name="Mewes H.-W."/>
            <person name="Miosga T."/>
            <person name="Moestl D."/>
            <person name="Mueller-Auer S."/>
            <person name="Nentwich U."/>
            <person name="Obermaier B."/>
            <person name="Piravandi E."/>
            <person name="Pohl T.M."/>
            <person name="Portetelle D."/>
            <person name="Purnelle B."/>
            <person name="Rechmann S."/>
            <person name="Rieger M."/>
            <person name="Rinke M."/>
            <person name="Rose M."/>
            <person name="Scharfe M."/>
            <person name="Scherens B."/>
            <person name="Scholler P."/>
            <person name="Schwager C."/>
            <person name="Schwarz S."/>
            <person name="Underwood A.P."/>
            <person name="Urrestarazu L.A."/>
            <person name="Vandenbol M."/>
            <person name="Verhasselt P."/>
            <person name="Vierendeels F."/>
            <person name="Voet M."/>
            <person name="Volckaert G."/>
            <person name="Voss H."/>
            <person name="Wambutt R."/>
            <person name="Wedler E."/>
            <person name="Wedler H."/>
            <person name="Zimmermann F.K."/>
            <person name="Zollner A."/>
            <person name="Hani J."/>
            <person name="Hoheisel J.D."/>
        </authorList>
    </citation>
    <scope>NUCLEOTIDE SEQUENCE [LARGE SCALE GENOMIC DNA]</scope>
    <source>
        <strain>ATCC 204508 / S288c</strain>
    </source>
</reference>
<reference key="2">
    <citation type="journal article" date="2014" name="G3 (Bethesda)">
        <title>The reference genome sequence of Saccharomyces cerevisiae: Then and now.</title>
        <authorList>
            <person name="Engel S.R."/>
            <person name="Dietrich F.S."/>
            <person name="Fisk D.G."/>
            <person name="Binkley G."/>
            <person name="Balakrishnan R."/>
            <person name="Costanzo M.C."/>
            <person name="Dwight S.S."/>
            <person name="Hitz B.C."/>
            <person name="Karra K."/>
            <person name="Nash R.S."/>
            <person name="Weng S."/>
            <person name="Wong E.D."/>
            <person name="Lloyd P."/>
            <person name="Skrzypek M.S."/>
            <person name="Miyasato S.R."/>
            <person name="Simison M."/>
            <person name="Cherry J.M."/>
        </authorList>
    </citation>
    <scope>GENOME REANNOTATION</scope>
    <source>
        <strain>ATCC 204508 / S288c</strain>
    </source>
</reference>
<reference key="3">
    <citation type="journal article" date="2007" name="Eukaryot. Cell">
        <title>GAS2 and GAS4, a pair of developmentally regulated genes required for spore wall assembly in Saccharomyces cerevisiae.</title>
        <authorList>
            <person name="Ragni E."/>
            <person name="Coluccio A."/>
            <person name="Rolli E."/>
            <person name="Rodriguez-Pena J.M."/>
            <person name="Colasante G."/>
            <person name="Arroyo J."/>
            <person name="Neiman A.M."/>
            <person name="Popolo L."/>
        </authorList>
    </citation>
    <scope>FUNCTION</scope>
    <scope>DEVELOPMENTAL STAGE</scope>
</reference>
<reference key="4">
    <citation type="journal article" date="2007" name="Yeast">
        <title>The Gas family of proteins of Saccharomyces cerevisiae: characterization and evolutionary analysis.</title>
        <authorList>
            <person name="Ragni E."/>
            <person name="Fontaine T."/>
            <person name="Gissi C."/>
            <person name="Latge J.-P."/>
            <person name="Popolo L."/>
        </authorList>
    </citation>
    <scope>FUNCTION</scope>
</reference>
<reference key="5">
    <citation type="journal article" date="2008" name="J. Biol. Chem.">
        <title>Disulfide bond structure and domain organization of yeast beta(1,3)-glucanosyltransferases involved in cell wall biogenesis.</title>
        <authorList>
            <person name="Popolo L."/>
            <person name="Ragni E."/>
            <person name="Carotti C."/>
            <person name="Palomares O."/>
            <person name="Aardema R."/>
            <person name="Back J.W."/>
            <person name="Dekker H.L."/>
            <person name="de Koning L.J."/>
            <person name="de Jong L."/>
            <person name="de Koster C.G."/>
        </authorList>
    </citation>
    <scope>DISULFIDE BONDS</scope>
</reference>
<reference key="6">
    <citation type="journal article" date="2009" name="J. Biol. Chem.">
        <title>Molecular mechanisms of yeast cell wall glucan remodeling.</title>
        <authorList>
            <person name="Hurtado-Guerrero R."/>
            <person name="Schuettelkopf A.W."/>
            <person name="Mouyna I."/>
            <person name="Ibrahim A.F.M."/>
            <person name="Shepherd S."/>
            <person name="Fontaine T."/>
            <person name="Latge J.-P."/>
            <person name="van Aalten D.M.F."/>
        </authorList>
    </citation>
    <scope>X-RAY CRYSTALLOGRAPHY (1.62 ANGSTROMS) OF WILD-TYPE AND MUTANT GLN-176 IN COMPLEX WITH SUBSTRATE ANALOGS</scope>
    <scope>FUNCTION</scope>
    <scope>CATALYTIC ACTIVITY</scope>
    <scope>DISULFIDE BONDS</scope>
    <scope>MUTAGENESIS OF GLN-62; TYR-107; ASP-132; ASN-175; GLU-176; TYR-244; GLU-275; TYR-307; PHE-404 AND TYR-474</scope>
</reference>
<protein>
    <recommendedName>
        <fullName>1,3-beta-glucanosyltransferase GAS2</fullName>
        <ecNumber evidence="6">2.4.1.-</ecNumber>
    </recommendedName>
    <alternativeName>
        <fullName>Glycolipid-anchored surface protein 2</fullName>
    </alternativeName>
</protein>
<organism>
    <name type="scientific">Saccharomyces cerevisiae (strain ATCC 204508 / S288c)</name>
    <name type="common">Baker's yeast</name>
    <dbReference type="NCBI Taxonomy" id="559292"/>
    <lineage>
        <taxon>Eukaryota</taxon>
        <taxon>Fungi</taxon>
        <taxon>Dikarya</taxon>
        <taxon>Ascomycota</taxon>
        <taxon>Saccharomycotina</taxon>
        <taxon>Saccharomycetes</taxon>
        <taxon>Saccharomycetales</taxon>
        <taxon>Saccharomycetaceae</taxon>
        <taxon>Saccharomyces</taxon>
    </lineage>
</organism>
<evidence type="ECO:0000250" key="1"/>
<evidence type="ECO:0000255" key="2"/>
<evidence type="ECO:0000269" key="3">
    <source>
    </source>
</evidence>
<evidence type="ECO:0000269" key="4">
    <source>
    </source>
</evidence>
<evidence type="ECO:0000269" key="5">
    <source>
    </source>
</evidence>
<evidence type="ECO:0000269" key="6">
    <source>
    </source>
</evidence>
<evidence type="ECO:0000305" key="7"/>
<evidence type="ECO:0000305" key="8">
    <source>
    </source>
</evidence>
<evidence type="ECO:0007829" key="9">
    <source>
        <dbReference type="PDB" id="2W61"/>
    </source>
</evidence>
<evidence type="ECO:0007829" key="10">
    <source>
        <dbReference type="PDB" id="5FIH"/>
    </source>
</evidence>
<evidence type="ECO:0007829" key="11">
    <source>
        <dbReference type="PDB" id="5O9Q"/>
    </source>
</evidence>
<evidence type="ECO:0007829" key="12">
    <source>
        <dbReference type="PDB" id="5OA2"/>
    </source>
</evidence>
<proteinExistence type="evidence at protein level"/>
<dbReference type="EC" id="2.4.1.-" evidence="6"/>
<dbReference type="EMBL" id="U19028">
    <property type="protein sequence ID" value="AAB67255.1"/>
    <property type="molecule type" value="Genomic_DNA"/>
</dbReference>
<dbReference type="EMBL" id="BK006945">
    <property type="protein sequence ID" value="DAA09648.1"/>
    <property type="molecule type" value="Genomic_DNA"/>
</dbReference>
<dbReference type="PIR" id="S51346">
    <property type="entry name" value="S51346"/>
</dbReference>
<dbReference type="RefSeq" id="NP_013447.1">
    <property type="nucleotide sequence ID" value="NM_001182232.1"/>
</dbReference>
<dbReference type="PDB" id="2W61">
    <property type="method" value="X-ray"/>
    <property type="resolution" value="1.62 A"/>
    <property type="chains" value="A=1-555"/>
</dbReference>
<dbReference type="PDB" id="2W62">
    <property type="method" value="X-ray"/>
    <property type="resolution" value="1.85 A"/>
    <property type="chains" value="A=1-555"/>
</dbReference>
<dbReference type="PDB" id="2W63">
    <property type="method" value="X-ray"/>
    <property type="resolution" value="1.90 A"/>
    <property type="chains" value="A=1-555"/>
</dbReference>
<dbReference type="PDB" id="5FIH">
    <property type="method" value="X-ray"/>
    <property type="resolution" value="1.80 A"/>
    <property type="chains" value="A=1-555"/>
</dbReference>
<dbReference type="PDB" id="5O9O">
    <property type="method" value="X-ray"/>
    <property type="resolution" value="1.90 A"/>
    <property type="chains" value="A=1-555"/>
</dbReference>
<dbReference type="PDB" id="5O9P">
    <property type="method" value="X-ray"/>
    <property type="resolution" value="1.75 A"/>
    <property type="chains" value="A=1-555"/>
</dbReference>
<dbReference type="PDB" id="5O9Q">
    <property type="method" value="X-ray"/>
    <property type="resolution" value="1.40 A"/>
    <property type="chains" value="A=1-555"/>
</dbReference>
<dbReference type="PDB" id="5O9R">
    <property type="method" value="X-ray"/>
    <property type="resolution" value="1.70 A"/>
    <property type="chains" value="A=1-555"/>
</dbReference>
<dbReference type="PDB" id="5O9Y">
    <property type="method" value="X-ray"/>
    <property type="resolution" value="1.57 A"/>
    <property type="chains" value="A=1-555"/>
</dbReference>
<dbReference type="PDB" id="5OA2">
    <property type="method" value="X-ray"/>
    <property type="resolution" value="2.15 A"/>
    <property type="chains" value="A/B/C=1-555"/>
</dbReference>
<dbReference type="PDB" id="5OA6">
    <property type="method" value="X-ray"/>
    <property type="resolution" value="1.94 A"/>
    <property type="chains" value="A=1-555"/>
</dbReference>
<dbReference type="PDBsum" id="2W61"/>
<dbReference type="PDBsum" id="2W62"/>
<dbReference type="PDBsum" id="2W63"/>
<dbReference type="PDBsum" id="5FIH"/>
<dbReference type="PDBsum" id="5O9O"/>
<dbReference type="PDBsum" id="5O9P"/>
<dbReference type="PDBsum" id="5O9Q"/>
<dbReference type="PDBsum" id="5O9R"/>
<dbReference type="PDBsum" id="5O9Y"/>
<dbReference type="PDBsum" id="5OA2"/>
<dbReference type="PDBsum" id="5OA6"/>
<dbReference type="SMR" id="Q06135"/>
<dbReference type="BioGRID" id="31605">
    <property type="interactions" value="73"/>
</dbReference>
<dbReference type="DIP" id="DIP-4669N"/>
<dbReference type="FunCoup" id="Q06135">
    <property type="interactions" value="89"/>
</dbReference>
<dbReference type="IntAct" id="Q06135">
    <property type="interactions" value="3"/>
</dbReference>
<dbReference type="MINT" id="Q06135"/>
<dbReference type="STRING" id="4932.YLR343W"/>
<dbReference type="CAZy" id="CBM43">
    <property type="family name" value="Carbohydrate-Binding Module Family 43"/>
</dbReference>
<dbReference type="CAZy" id="GH72">
    <property type="family name" value="Glycoside Hydrolase Family 72"/>
</dbReference>
<dbReference type="GlyCosmos" id="Q06135">
    <property type="glycosylation" value="1 site, No reported glycans"/>
</dbReference>
<dbReference type="GlyGen" id="Q06135">
    <property type="glycosylation" value="1 site"/>
</dbReference>
<dbReference type="iPTMnet" id="Q06135"/>
<dbReference type="PaxDb" id="4932-YLR343W"/>
<dbReference type="PeptideAtlas" id="Q06135"/>
<dbReference type="EnsemblFungi" id="YLR343W_mRNA">
    <property type="protein sequence ID" value="YLR343W"/>
    <property type="gene ID" value="YLR343W"/>
</dbReference>
<dbReference type="GeneID" id="851056"/>
<dbReference type="KEGG" id="sce:YLR343W"/>
<dbReference type="AGR" id="SGD:S000004335"/>
<dbReference type="SGD" id="S000004335">
    <property type="gene designation" value="GAS2"/>
</dbReference>
<dbReference type="VEuPathDB" id="FungiDB:YLR343W"/>
<dbReference type="eggNOG" id="ENOG502QRZZ">
    <property type="taxonomic scope" value="Eukaryota"/>
</dbReference>
<dbReference type="GeneTree" id="ENSGT00940000176308"/>
<dbReference type="HOGENOM" id="CLU_021855_2_0_1"/>
<dbReference type="InParanoid" id="Q06135"/>
<dbReference type="OMA" id="ICLRDIP"/>
<dbReference type="OrthoDB" id="421038at2759"/>
<dbReference type="BioCyc" id="YEAST:G3O-32419-MONOMER"/>
<dbReference type="BioGRID-ORCS" id="851056">
    <property type="hits" value="7 hits in 10 CRISPR screens"/>
</dbReference>
<dbReference type="EvolutionaryTrace" id="Q06135"/>
<dbReference type="PRO" id="PR:Q06135"/>
<dbReference type="Proteomes" id="UP000002311">
    <property type="component" value="Chromosome XII"/>
</dbReference>
<dbReference type="RNAct" id="Q06135">
    <property type="molecule type" value="protein"/>
</dbReference>
<dbReference type="GO" id="GO:0005737">
    <property type="term" value="C:cytoplasm"/>
    <property type="evidence" value="ECO:0007005"/>
    <property type="project" value="SGD"/>
</dbReference>
<dbReference type="GO" id="GO:0009277">
    <property type="term" value="C:fungal-type cell wall"/>
    <property type="evidence" value="ECO:0000318"/>
    <property type="project" value="GO_Central"/>
</dbReference>
<dbReference type="GO" id="GO:0000324">
    <property type="term" value="C:fungal-type vacuole"/>
    <property type="evidence" value="ECO:0007005"/>
    <property type="project" value="SGD"/>
</dbReference>
<dbReference type="GO" id="GO:0005886">
    <property type="term" value="C:plasma membrane"/>
    <property type="evidence" value="ECO:0007669"/>
    <property type="project" value="UniProtKB-SubCell"/>
</dbReference>
<dbReference type="GO" id="GO:0098552">
    <property type="term" value="C:side of membrane"/>
    <property type="evidence" value="ECO:0007669"/>
    <property type="project" value="UniProtKB-KW"/>
</dbReference>
<dbReference type="GO" id="GO:0042124">
    <property type="term" value="F:1,3-beta-glucanosyltransferase activity"/>
    <property type="evidence" value="ECO:0000314"/>
    <property type="project" value="SGD"/>
</dbReference>
<dbReference type="GO" id="GO:0030476">
    <property type="term" value="P:ascospore wall assembly"/>
    <property type="evidence" value="ECO:0000315"/>
    <property type="project" value="SGD"/>
</dbReference>
<dbReference type="GO" id="GO:0071970">
    <property type="term" value="P:fungal-type cell wall (1-&gt;3)-beta-D-glucan biosynthetic process"/>
    <property type="evidence" value="ECO:0000318"/>
    <property type="project" value="GO_Central"/>
</dbReference>
<dbReference type="GO" id="GO:0070880">
    <property type="term" value="P:fungal-type cell wall beta-glucan biosynthetic process"/>
    <property type="evidence" value="ECO:0000314"/>
    <property type="project" value="SGD"/>
</dbReference>
<dbReference type="GO" id="GO:0031505">
    <property type="term" value="P:fungal-type cell wall organization"/>
    <property type="evidence" value="ECO:0000318"/>
    <property type="project" value="GO_Central"/>
</dbReference>
<dbReference type="FunFam" id="3.20.20.80:FF:000038">
    <property type="entry name" value="1,3-beta-glucanosyltransferase"/>
    <property type="match status" value="1"/>
</dbReference>
<dbReference type="Gene3D" id="1.20.58.1040">
    <property type="match status" value="1"/>
</dbReference>
<dbReference type="Gene3D" id="3.20.20.80">
    <property type="entry name" value="Glycosidases"/>
    <property type="match status" value="1"/>
</dbReference>
<dbReference type="InterPro" id="IPR004886">
    <property type="entry name" value="Glucanosyltransferase"/>
</dbReference>
<dbReference type="InterPro" id="IPR017853">
    <property type="entry name" value="Glycoside_hydrolase_SF"/>
</dbReference>
<dbReference type="InterPro" id="IPR012946">
    <property type="entry name" value="X8"/>
</dbReference>
<dbReference type="PANTHER" id="PTHR31468">
    <property type="entry name" value="1,3-BETA-GLUCANOSYLTRANSFERASE GAS1"/>
    <property type="match status" value="1"/>
</dbReference>
<dbReference type="PANTHER" id="PTHR31468:SF10">
    <property type="entry name" value="1,3-BETA-GLUCANOSYLTRANSFERASE GAS2"/>
    <property type="match status" value="1"/>
</dbReference>
<dbReference type="Pfam" id="PF03198">
    <property type="entry name" value="Glyco_hydro_72"/>
    <property type="match status" value="1"/>
</dbReference>
<dbReference type="Pfam" id="PF07983">
    <property type="entry name" value="X8"/>
    <property type="match status" value="1"/>
</dbReference>
<dbReference type="SMART" id="SM00768">
    <property type="entry name" value="X8"/>
    <property type="match status" value="1"/>
</dbReference>
<dbReference type="SUPFAM" id="SSF51445">
    <property type="entry name" value="(Trans)glycosidases"/>
    <property type="match status" value="1"/>
</dbReference>
<name>GAS2_YEAST</name>
<comment type="function">
    <text evidence="3 4 6">Splits internally a 1,3-beta-glucan molecule and transfers the newly generated reducing end (the donor) to the non-reducing end of another 1,3-beta-glucan molecule (the acceptor) forming a 1,3-beta linkage, resulting in the elongation of 1,3-beta-glucan chains in the cell wall. Involved in spore wall assembly.</text>
</comment>
<comment type="subcellular location">
    <subcellularLocation>
        <location evidence="1">Cell membrane</location>
        <topology evidence="1">Lipid-anchor</topology>
        <topology evidence="1">GPI-anchor</topology>
    </subcellularLocation>
</comment>
<comment type="developmental stage">
    <text evidence="3">Expressed exclusively during sporulation (at protein level).</text>
</comment>
<comment type="PTM">
    <text>N-glycosylated.</text>
</comment>
<comment type="similarity">
    <text evidence="7">Belongs to the glycosyl hydrolase 72 family.</text>
</comment>
<keyword id="KW-0002">3D-structure</keyword>
<keyword id="KW-1003">Cell membrane</keyword>
<keyword id="KW-0961">Cell wall biogenesis/degradation</keyword>
<keyword id="KW-1015">Disulfide bond</keyword>
<keyword id="KW-0325">Glycoprotein</keyword>
<keyword id="KW-0336">GPI-anchor</keyword>
<keyword id="KW-0449">Lipoprotein</keyword>
<keyword id="KW-0472">Membrane</keyword>
<keyword id="KW-1185">Reference proteome</keyword>
<keyword id="KW-0732">Signal</keyword>
<keyword id="KW-0808">Transferase</keyword>
<feature type="signal peptide" evidence="2">
    <location>
        <begin position="1"/>
        <end position="24"/>
    </location>
</feature>
<feature type="chain" id="PRO_0000010475" description="1,3-beta-glucanosyltransferase GAS2">
    <location>
        <begin position="25"/>
        <end position="531"/>
    </location>
</feature>
<feature type="propeptide" id="PRO_0000010476" description="Removed in mature form" evidence="2">
    <location>
        <begin position="532"/>
        <end position="555"/>
    </location>
</feature>
<feature type="active site" description="Proton donor">
    <location>
        <position position="176"/>
    </location>
</feature>
<feature type="active site" description="Nucleophile">
    <location>
        <position position="275"/>
    </location>
</feature>
<feature type="binding site" evidence="8">
    <location>
        <position position="107"/>
    </location>
    <ligand>
        <name>(1,3-beta-D-glucosyl)n</name>
        <dbReference type="ChEBI" id="CHEBI:37671"/>
        <label>1</label>
        <note>donor substrate</note>
    </ligand>
</feature>
<feature type="binding site" evidence="8">
    <location>
        <begin position="134"/>
        <end position="142"/>
    </location>
    <ligand>
        <name>(1,3-beta-D-glucosyl)n</name>
        <dbReference type="ChEBI" id="CHEBI:37671"/>
        <label>1</label>
        <note>donor substrate</note>
    </ligand>
</feature>
<feature type="binding site" evidence="8">
    <location>
        <position position="175"/>
    </location>
    <ligand>
        <name>(1,3-beta-D-glucosyl)n</name>
        <dbReference type="ChEBI" id="CHEBI:37671"/>
        <label>1</label>
        <note>donor substrate</note>
    </ligand>
</feature>
<feature type="binding site" evidence="8">
    <location>
        <position position="176"/>
    </location>
    <ligand>
        <name>(1,3-beta-D-glucosyl)n</name>
        <dbReference type="ChEBI" id="CHEBI:37671"/>
        <label>2</label>
        <note>acceptor substrate</note>
    </ligand>
</feature>
<feature type="binding site" evidence="8">
    <location>
        <position position="217"/>
    </location>
    <ligand>
        <name>(1,3-beta-D-glucosyl)n</name>
        <dbReference type="ChEBI" id="CHEBI:37671"/>
        <label>2</label>
        <note>acceptor substrate</note>
    </ligand>
</feature>
<feature type="binding site" evidence="8">
    <location>
        <position position="222"/>
    </location>
    <ligand>
        <name>(1,3-beta-D-glucosyl)n</name>
        <dbReference type="ChEBI" id="CHEBI:37671"/>
        <label>2</label>
        <note>acceptor substrate</note>
    </ligand>
</feature>
<feature type="binding site" evidence="8">
    <location>
        <position position="307"/>
    </location>
    <ligand>
        <name>(1,3-beta-D-glucosyl)n</name>
        <dbReference type="ChEBI" id="CHEBI:37671"/>
        <label>1</label>
        <note>donor substrate</note>
    </ligand>
</feature>
<feature type="lipid moiety-binding region" description="GPI-anchor amidated aspartate" evidence="2">
    <location>
        <position position="531"/>
    </location>
</feature>
<feature type="glycosylation site" description="N-linked (GlcNAc...) asparagine" evidence="2">
    <location>
        <position position="498"/>
    </location>
</feature>
<feature type="disulfide bond" evidence="5 6">
    <location>
        <begin position="89"/>
        <end position="118"/>
    </location>
</feature>
<feature type="disulfide bond" evidence="5 6">
    <location>
        <begin position="231"/>
        <end position="367"/>
    </location>
</feature>
<feature type="disulfide bond" evidence="5 6">
    <location>
        <begin position="247"/>
        <end position="278"/>
    </location>
</feature>
<feature type="disulfide bond" evidence="5 6">
    <location>
        <begin position="390"/>
        <end position="442"/>
    </location>
</feature>
<feature type="disulfide bond" evidence="5 6">
    <location>
        <begin position="392"/>
        <end position="489"/>
    </location>
</feature>
<feature type="disulfide bond" evidence="5 6">
    <location>
        <begin position="399"/>
        <end position="466"/>
    </location>
</feature>
<feature type="disulfide bond" evidence="5 6">
    <location>
        <begin position="419"/>
        <end position="424"/>
    </location>
</feature>
<feature type="mutagenesis site" description="Slightly reduces catalytic activity." evidence="6">
    <original>Q</original>
    <variation>A</variation>
    <location>
        <position position="62"/>
    </location>
</feature>
<feature type="mutagenesis site" description="Slightly reduces catalytic activity." evidence="6">
    <original>Y</original>
    <variation>F</variation>
    <variation>Q</variation>
    <location>
        <position position="107"/>
    </location>
</feature>
<feature type="mutagenesis site" description="Slightly reduces catalytic activity." evidence="6">
    <original>D</original>
    <variation>N</variation>
    <location>
        <position position="132"/>
    </location>
</feature>
<feature type="mutagenesis site" description="Abolishes catalytic activity." evidence="6">
    <original>N</original>
    <variation>A</variation>
    <location>
        <position position="175"/>
    </location>
</feature>
<feature type="mutagenesis site" description="Abolishes catalytic activity." evidence="6">
    <original>E</original>
    <variation>Q</variation>
    <location>
        <position position="176"/>
    </location>
</feature>
<feature type="mutagenesis site" description="Moderately reduces hydrolysis, and causes a 10-fold reduction in transglycosylation activity." evidence="6">
    <original>Y</original>
    <variation>F</variation>
    <variation>Q</variation>
    <location>
        <position position="244"/>
    </location>
</feature>
<feature type="mutagenesis site" description="Abolishes catalytic activity." evidence="6">
    <original>E</original>
    <variation>Q</variation>
    <location>
        <position position="275"/>
    </location>
</feature>
<feature type="mutagenesis site" description="Moderately reduces catalytic activity." evidence="6">
    <original>Y</original>
    <variation>Q</variation>
    <location>
        <position position="307"/>
    </location>
</feature>
<feature type="mutagenesis site" description="Slightly reduces catalytic activity." evidence="6">
    <original>F</original>
    <variation>A</variation>
    <location>
        <position position="404"/>
    </location>
</feature>
<feature type="mutagenesis site" description="No effect." evidence="6">
    <original>Y</original>
    <variation>A</variation>
    <location>
        <position position="474"/>
    </location>
</feature>
<feature type="strand" evidence="11">
    <location>
        <begin position="36"/>
        <end position="39"/>
    </location>
</feature>
<feature type="strand" evidence="11">
    <location>
        <begin position="42"/>
        <end position="45"/>
    </location>
</feature>
<feature type="turn" evidence="11">
    <location>
        <begin position="46"/>
        <end position="48"/>
    </location>
</feature>
<feature type="strand" evidence="12">
    <location>
        <begin position="50"/>
        <end position="52"/>
    </location>
</feature>
<feature type="strand" evidence="11">
    <location>
        <begin position="54"/>
        <end position="58"/>
    </location>
</feature>
<feature type="turn" evidence="9">
    <location>
        <begin position="72"/>
        <end position="75"/>
    </location>
</feature>
<feature type="helix" evidence="11">
    <location>
        <begin position="82"/>
        <end position="84"/>
    </location>
</feature>
<feature type="helix" evidence="11">
    <location>
        <begin position="86"/>
        <end position="99"/>
    </location>
</feature>
<feature type="strand" evidence="11">
    <location>
        <begin position="102"/>
        <end position="106"/>
    </location>
</feature>
<feature type="helix" evidence="11">
    <location>
        <begin position="116"/>
        <end position="124"/>
    </location>
</feature>
<feature type="strand" evidence="11">
    <location>
        <begin position="128"/>
        <end position="133"/>
    </location>
</feature>
<feature type="strand" evidence="10">
    <location>
        <begin position="142"/>
        <end position="144"/>
    </location>
</feature>
<feature type="helix" evidence="11">
    <location>
        <begin position="149"/>
        <end position="162"/>
    </location>
</feature>
<feature type="strand" evidence="11">
    <location>
        <begin position="168"/>
        <end position="178"/>
    </location>
</feature>
<feature type="helix" evidence="11">
    <location>
        <begin position="184"/>
        <end position="186"/>
    </location>
</feature>
<feature type="helix" evidence="11">
    <location>
        <begin position="187"/>
        <end position="203"/>
    </location>
</feature>
<feature type="strand" evidence="11">
    <location>
        <begin position="204"/>
        <end position="206"/>
    </location>
</feature>
<feature type="strand" evidence="11">
    <location>
        <begin position="211"/>
        <end position="215"/>
    </location>
</feature>
<feature type="turn" evidence="11">
    <location>
        <begin position="219"/>
        <end position="221"/>
    </location>
</feature>
<feature type="helix" evidence="11">
    <location>
        <begin position="222"/>
        <end position="228"/>
    </location>
</feature>
<feature type="strand" evidence="12">
    <location>
        <begin position="231"/>
        <end position="233"/>
    </location>
</feature>
<feature type="strand" evidence="11">
    <location>
        <begin position="239"/>
        <end position="243"/>
    </location>
</feature>
<feature type="helix" evidence="11">
    <location>
        <begin position="252"/>
        <end position="255"/>
    </location>
</feature>
<feature type="helix" evidence="11">
    <location>
        <begin position="257"/>
        <end position="264"/>
    </location>
</feature>
<feature type="strand" evidence="11">
    <location>
        <begin position="271"/>
        <end position="276"/>
    </location>
</feature>
<feature type="strand" evidence="11">
    <location>
        <begin position="280"/>
        <end position="283"/>
    </location>
</feature>
<feature type="helix" evidence="11">
    <location>
        <begin position="288"/>
        <end position="292"/>
    </location>
</feature>
<feature type="helix" evidence="11">
    <location>
        <begin position="295"/>
        <end position="298"/>
    </location>
</feature>
<feature type="strand" evidence="11">
    <location>
        <begin position="303"/>
        <end position="307"/>
    </location>
</feature>
<feature type="strand" evidence="11">
    <location>
        <begin position="313"/>
        <end position="315"/>
    </location>
</feature>
<feature type="strand" evidence="11">
    <location>
        <begin position="318"/>
        <end position="321"/>
    </location>
</feature>
<feature type="strand" evidence="11">
    <location>
        <begin position="327"/>
        <end position="329"/>
    </location>
</feature>
<feature type="helix" evidence="11">
    <location>
        <begin position="332"/>
        <end position="342"/>
    </location>
</feature>
<feature type="helix" evidence="11">
    <location>
        <begin position="350"/>
        <end position="354"/>
    </location>
</feature>
<feature type="turn" evidence="11">
    <location>
        <begin position="372"/>
        <end position="374"/>
    </location>
</feature>
<feature type="helix" evidence="11">
    <location>
        <begin position="387"/>
        <end position="396"/>
    </location>
</feature>
<feature type="strand" evidence="11">
    <location>
        <begin position="398"/>
        <end position="401"/>
    </location>
</feature>
<feature type="helix" evidence="11">
    <location>
        <begin position="410"/>
        <end position="421"/>
    </location>
</feature>
<feature type="helix" evidence="11">
    <location>
        <begin position="425"/>
        <end position="427"/>
    </location>
</feature>
<feature type="turn" evidence="11">
    <location>
        <begin position="431"/>
        <end position="434"/>
    </location>
</feature>
<feature type="turn" evidence="11">
    <location>
        <begin position="438"/>
        <end position="441"/>
    </location>
</feature>
<feature type="helix" evidence="11">
    <location>
        <begin position="444"/>
        <end position="453"/>
    </location>
</feature>
<feature type="strand" evidence="11">
    <location>
        <begin position="473"/>
        <end position="475"/>
    </location>
</feature>
<feature type="helix" evidence="11">
    <location>
        <begin position="477"/>
        <end position="480"/>
    </location>
</feature>
<feature type="helix" evidence="9">
    <location>
        <begin position="490"/>
        <end position="501"/>
    </location>
</feature>
<gene>
    <name type="primary">GAS2</name>
    <name type="ordered locus">YLR343W</name>
    <name type="ORF">L8300.5</name>
</gene>
<sequence length="555" mass="62362">MNKKQNFYAAIIVAIFLCLQLSHGSSGVSFEKTPAIKIVGNKFFDSESGEQFFIKGIAYQLQRSEEELSNANGAFETSYIDALADPKICLRDIPFLKMLGVNTLRVYAIDPTKSHDICMEALSAEGMYVLLDLSEPDISINRENPSWDVHIFERYKSVIDAMSSFPNLLGYFAGNEVTNDHTNTFASPFVKAAIRDAKEYISHSNHRKIPVGYSTNDDAMTRDNLARYFVCGDVKADFYGINMYEWCGYSTYGTSGYRERTKEFEGYPIPVFFSEFGCNLVRPRPFTEVSALYGNKMSSVWSGGLAYMYFEEENEYGVVKINDNDGVDILPDFKNLKKEFAKADPKGITEEEYLTAKEPTEVESVECPHIAVGVWEANEKLPETPDRSKCACLDEILPCEIVPFGAESGKYEEYFSYLCSKVDCSDILANGKTGEYGEFSDCSVEQKLSLQLSKLYCKIGANDRHCPLNDKNVYFNLESLQPLTSESICKNVFDSIRNITYNHGDYSKSNPSRSKESLNVKYPSSEERENDGTIAFKTSGFVILLISMIAAGILL</sequence>
<accession>Q06135</accession>
<accession>D6VYY2</accession>